<gene>
    <name evidence="1" type="primary">adk</name>
    <name type="ordered locus">BURPS1710b_1080</name>
</gene>
<name>KAD_BURP1</name>
<proteinExistence type="evidence at protein level"/>
<keyword id="KW-0002">3D-structure</keyword>
<keyword id="KW-0067">ATP-binding</keyword>
<keyword id="KW-0963">Cytoplasm</keyword>
<keyword id="KW-0418">Kinase</keyword>
<keyword id="KW-0545">Nucleotide biosynthesis</keyword>
<keyword id="KW-0547">Nucleotide-binding</keyword>
<keyword id="KW-0808">Transferase</keyword>
<protein>
    <recommendedName>
        <fullName evidence="1">Adenylate kinase</fullName>
        <shortName evidence="1">AK</shortName>
        <ecNumber evidence="1">2.7.4.3</ecNumber>
    </recommendedName>
    <alternativeName>
        <fullName evidence="1">ATP-AMP transphosphorylase</fullName>
    </alternativeName>
    <alternativeName>
        <fullName evidence="1">ATP:AMP phosphotransferase</fullName>
    </alternativeName>
    <alternativeName>
        <fullName evidence="1">Adenylate monophosphate kinase</fullName>
    </alternativeName>
</protein>
<dbReference type="EC" id="2.7.4.3" evidence="1"/>
<dbReference type="EMBL" id="CP000124">
    <property type="protein sequence ID" value="ABA49610.1"/>
    <property type="molecule type" value="Genomic_DNA"/>
</dbReference>
<dbReference type="RefSeq" id="WP_004185840.1">
    <property type="nucleotide sequence ID" value="NC_007434.1"/>
</dbReference>
<dbReference type="PDB" id="3GMT">
    <property type="method" value="X-ray"/>
    <property type="resolution" value="2.10 A"/>
    <property type="chains" value="A/B=1-215"/>
</dbReference>
<dbReference type="PDBsum" id="3GMT"/>
<dbReference type="SMR" id="Q3JVB1"/>
<dbReference type="EnsemblBacteria" id="ABA49610">
    <property type="protein sequence ID" value="ABA49610"/>
    <property type="gene ID" value="BURPS1710b_1080"/>
</dbReference>
<dbReference type="GeneID" id="93059382"/>
<dbReference type="KEGG" id="bpm:BURPS1710b_1080"/>
<dbReference type="HOGENOM" id="CLU_032354_1_2_4"/>
<dbReference type="UniPathway" id="UPA00588">
    <property type="reaction ID" value="UER00649"/>
</dbReference>
<dbReference type="EvolutionaryTrace" id="Q3JVB1"/>
<dbReference type="Proteomes" id="UP000002700">
    <property type="component" value="Chromosome I"/>
</dbReference>
<dbReference type="GO" id="GO:0005737">
    <property type="term" value="C:cytoplasm"/>
    <property type="evidence" value="ECO:0007669"/>
    <property type="project" value="UniProtKB-SubCell"/>
</dbReference>
<dbReference type="GO" id="GO:0004017">
    <property type="term" value="F:adenylate kinase activity"/>
    <property type="evidence" value="ECO:0007669"/>
    <property type="project" value="UniProtKB-UniRule"/>
</dbReference>
<dbReference type="GO" id="GO:0005524">
    <property type="term" value="F:ATP binding"/>
    <property type="evidence" value="ECO:0007669"/>
    <property type="project" value="UniProtKB-UniRule"/>
</dbReference>
<dbReference type="GO" id="GO:0044209">
    <property type="term" value="P:AMP salvage"/>
    <property type="evidence" value="ECO:0007669"/>
    <property type="project" value="UniProtKB-UniRule"/>
</dbReference>
<dbReference type="CDD" id="cd01428">
    <property type="entry name" value="ADK"/>
    <property type="match status" value="1"/>
</dbReference>
<dbReference type="FunFam" id="3.40.50.300:FF:000106">
    <property type="entry name" value="Adenylate kinase mitochondrial"/>
    <property type="match status" value="1"/>
</dbReference>
<dbReference type="Gene3D" id="3.40.50.300">
    <property type="entry name" value="P-loop containing nucleotide triphosphate hydrolases"/>
    <property type="match status" value="1"/>
</dbReference>
<dbReference type="HAMAP" id="MF_00235">
    <property type="entry name" value="Adenylate_kinase_Adk"/>
    <property type="match status" value="1"/>
</dbReference>
<dbReference type="InterPro" id="IPR006259">
    <property type="entry name" value="Adenyl_kin_sub"/>
</dbReference>
<dbReference type="InterPro" id="IPR000850">
    <property type="entry name" value="Adenylat/UMP-CMP_kin"/>
</dbReference>
<dbReference type="InterPro" id="IPR033690">
    <property type="entry name" value="Adenylat_kinase_CS"/>
</dbReference>
<dbReference type="InterPro" id="IPR007862">
    <property type="entry name" value="Adenylate_kinase_lid-dom"/>
</dbReference>
<dbReference type="InterPro" id="IPR027417">
    <property type="entry name" value="P-loop_NTPase"/>
</dbReference>
<dbReference type="NCBIfam" id="TIGR01351">
    <property type="entry name" value="adk"/>
    <property type="match status" value="1"/>
</dbReference>
<dbReference type="NCBIfam" id="NF001379">
    <property type="entry name" value="PRK00279.1-1"/>
    <property type="match status" value="1"/>
</dbReference>
<dbReference type="NCBIfam" id="NF001380">
    <property type="entry name" value="PRK00279.1-2"/>
    <property type="match status" value="1"/>
</dbReference>
<dbReference type="NCBIfam" id="NF001381">
    <property type="entry name" value="PRK00279.1-3"/>
    <property type="match status" value="1"/>
</dbReference>
<dbReference type="NCBIfam" id="NF011100">
    <property type="entry name" value="PRK14527.1"/>
    <property type="match status" value="1"/>
</dbReference>
<dbReference type="PANTHER" id="PTHR23359">
    <property type="entry name" value="NUCLEOTIDE KINASE"/>
    <property type="match status" value="1"/>
</dbReference>
<dbReference type="Pfam" id="PF00406">
    <property type="entry name" value="ADK"/>
    <property type="match status" value="1"/>
</dbReference>
<dbReference type="Pfam" id="PF05191">
    <property type="entry name" value="ADK_lid"/>
    <property type="match status" value="1"/>
</dbReference>
<dbReference type="PRINTS" id="PR00094">
    <property type="entry name" value="ADENYLTKNASE"/>
</dbReference>
<dbReference type="SUPFAM" id="SSF52540">
    <property type="entry name" value="P-loop containing nucleoside triphosphate hydrolases"/>
    <property type="match status" value="1"/>
</dbReference>
<dbReference type="PROSITE" id="PS00113">
    <property type="entry name" value="ADENYLATE_KINASE"/>
    <property type="match status" value="1"/>
</dbReference>
<sequence length="220" mass="24170">MRLILLGAPGAGKGTQANFIKEKFGIPQISTGDMLRAAVKAGTPLGVEAKTYMDEGKLVPDSLIIGLVKERLKEADCANGYLFDGFPRTIAQADAMKEAGVAIDYVLEIDVPFSEIIERMSGRRTHPASGRTYHVKFNPPKVEGKDDVTGEPLVQRDDDKEETVKKRLDVYEAQTKPLITYYGDWARRGAENGLKAPAYRKISGLGAVEEIRARVFDALK</sequence>
<comment type="function">
    <text evidence="1">Catalyzes the reversible transfer of the terminal phosphate group between ATP and AMP. Plays an important role in cellular energy homeostasis and in adenine nucleotide metabolism.</text>
</comment>
<comment type="catalytic activity">
    <reaction evidence="1">
        <text>AMP + ATP = 2 ADP</text>
        <dbReference type="Rhea" id="RHEA:12973"/>
        <dbReference type="ChEBI" id="CHEBI:30616"/>
        <dbReference type="ChEBI" id="CHEBI:456215"/>
        <dbReference type="ChEBI" id="CHEBI:456216"/>
        <dbReference type="EC" id="2.7.4.3"/>
    </reaction>
</comment>
<comment type="pathway">
    <text evidence="1">Purine metabolism; AMP biosynthesis via salvage pathway; AMP from ADP: step 1/1.</text>
</comment>
<comment type="subunit">
    <text evidence="1">Monomer.</text>
</comment>
<comment type="subcellular location">
    <subcellularLocation>
        <location evidence="1">Cytoplasm</location>
    </subcellularLocation>
</comment>
<comment type="domain">
    <text evidence="1 3">Consists of three domains, a large central CORE domain and two small peripheral domains, NMPbind and LID, which undergo movements during catalysis. The LID domain closes over the site of phosphoryl transfer upon ATP binding. Assembling and dissambling the active center during each catalytic cycle provides an effective means to prevent ATP hydrolysis.</text>
</comment>
<comment type="similarity">
    <text evidence="1">Belongs to the adenylate kinase family.</text>
</comment>
<feature type="chain" id="PRO_1000058802" description="Adenylate kinase">
    <location>
        <begin position="1"/>
        <end position="220"/>
    </location>
</feature>
<feature type="region of interest" description="NMP" evidence="1 2">
    <location>
        <begin position="30"/>
        <end position="59"/>
    </location>
</feature>
<feature type="region of interest" description="LID" evidence="1 2">
    <location>
        <begin position="122"/>
        <end position="159"/>
    </location>
</feature>
<feature type="binding site" evidence="1">
    <location>
        <begin position="10"/>
        <end position="15"/>
    </location>
    <ligand>
        <name>ATP</name>
        <dbReference type="ChEBI" id="CHEBI:30616"/>
    </ligand>
</feature>
<feature type="binding site" evidence="1">
    <location>
        <position position="31"/>
    </location>
    <ligand>
        <name>AMP</name>
        <dbReference type="ChEBI" id="CHEBI:456215"/>
    </ligand>
</feature>
<feature type="binding site" evidence="1">
    <location>
        <position position="36"/>
    </location>
    <ligand>
        <name>AMP</name>
        <dbReference type="ChEBI" id="CHEBI:456215"/>
    </ligand>
</feature>
<feature type="binding site" evidence="1">
    <location>
        <begin position="57"/>
        <end position="59"/>
    </location>
    <ligand>
        <name>AMP</name>
        <dbReference type="ChEBI" id="CHEBI:456215"/>
    </ligand>
</feature>
<feature type="binding site" evidence="1">
    <location>
        <begin position="85"/>
        <end position="88"/>
    </location>
    <ligand>
        <name>AMP</name>
        <dbReference type="ChEBI" id="CHEBI:456215"/>
    </ligand>
</feature>
<feature type="binding site" evidence="1">
    <location>
        <position position="92"/>
    </location>
    <ligand>
        <name>AMP</name>
        <dbReference type="ChEBI" id="CHEBI:456215"/>
    </ligand>
</feature>
<feature type="binding site" evidence="1">
    <location>
        <position position="123"/>
    </location>
    <ligand>
        <name>ATP</name>
        <dbReference type="ChEBI" id="CHEBI:30616"/>
    </ligand>
</feature>
<feature type="binding site" evidence="1">
    <location>
        <begin position="132"/>
        <end position="133"/>
    </location>
    <ligand>
        <name>ATP</name>
        <dbReference type="ChEBI" id="CHEBI:30616"/>
    </ligand>
</feature>
<feature type="binding site" evidence="1">
    <location>
        <position position="156"/>
    </location>
    <ligand>
        <name>AMP</name>
        <dbReference type="ChEBI" id="CHEBI:456215"/>
    </ligand>
</feature>
<feature type="binding site" evidence="1">
    <location>
        <position position="167"/>
    </location>
    <ligand>
        <name>AMP</name>
        <dbReference type="ChEBI" id="CHEBI:456215"/>
    </ligand>
</feature>
<feature type="binding site" evidence="1">
    <location>
        <position position="206"/>
    </location>
    <ligand>
        <name>ATP</name>
        <dbReference type="ChEBI" id="CHEBI:30616"/>
    </ligand>
</feature>
<feature type="strand" evidence="4">
    <location>
        <begin position="2"/>
        <end position="6"/>
    </location>
</feature>
<feature type="helix" evidence="4">
    <location>
        <begin position="13"/>
        <end position="24"/>
    </location>
</feature>
<feature type="helix" evidence="4">
    <location>
        <begin position="31"/>
        <end position="40"/>
    </location>
</feature>
<feature type="helix" evidence="4">
    <location>
        <begin position="44"/>
        <end position="53"/>
    </location>
</feature>
<feature type="turn" evidence="4">
    <location>
        <begin position="54"/>
        <end position="56"/>
    </location>
</feature>
<feature type="helix" evidence="4">
    <location>
        <begin position="61"/>
        <end position="73"/>
    </location>
</feature>
<feature type="helix" evidence="4">
    <location>
        <begin position="75"/>
        <end position="77"/>
    </location>
</feature>
<feature type="strand" evidence="4">
    <location>
        <begin position="81"/>
        <end position="85"/>
    </location>
</feature>
<feature type="helix" evidence="4">
    <location>
        <begin position="90"/>
        <end position="98"/>
    </location>
</feature>
<feature type="strand" evidence="4">
    <location>
        <begin position="104"/>
        <end position="109"/>
    </location>
</feature>
<feature type="helix" evidence="4">
    <location>
        <begin position="113"/>
        <end position="121"/>
    </location>
</feature>
<feature type="strand" evidence="4">
    <location>
        <begin position="123"/>
        <end position="126"/>
    </location>
</feature>
<feature type="turn" evidence="4">
    <location>
        <begin position="127"/>
        <end position="130"/>
    </location>
</feature>
<feature type="strand" evidence="4">
    <location>
        <begin position="131"/>
        <end position="134"/>
    </location>
</feature>
<feature type="turn" evidence="4">
    <location>
        <begin position="135"/>
        <end position="137"/>
    </location>
</feature>
<feature type="turn" evidence="4">
    <location>
        <begin position="147"/>
        <end position="149"/>
    </location>
</feature>
<feature type="helix" evidence="4">
    <location>
        <begin position="157"/>
        <end position="159"/>
    </location>
</feature>
<feature type="helix" evidence="4">
    <location>
        <begin position="161"/>
        <end position="188"/>
    </location>
</feature>
<feature type="strand" evidence="4">
    <location>
        <begin position="198"/>
        <end position="202"/>
    </location>
</feature>
<organism>
    <name type="scientific">Burkholderia pseudomallei (strain 1710b)</name>
    <dbReference type="NCBI Taxonomy" id="320372"/>
    <lineage>
        <taxon>Bacteria</taxon>
        <taxon>Pseudomonadati</taxon>
        <taxon>Pseudomonadota</taxon>
        <taxon>Betaproteobacteria</taxon>
        <taxon>Burkholderiales</taxon>
        <taxon>Burkholderiaceae</taxon>
        <taxon>Burkholderia</taxon>
        <taxon>pseudomallei group</taxon>
    </lineage>
</organism>
<accession>Q3JVB1</accession>
<evidence type="ECO:0000255" key="1">
    <source>
        <dbReference type="HAMAP-Rule" id="MF_00235"/>
    </source>
</evidence>
<evidence type="ECO:0000269" key="2">
    <source>
    </source>
</evidence>
<evidence type="ECO:0000305" key="3">
    <source>
    </source>
</evidence>
<evidence type="ECO:0007829" key="4">
    <source>
        <dbReference type="PDB" id="3GMT"/>
    </source>
</evidence>
<reference key="1">
    <citation type="journal article" date="2010" name="Genome Biol. Evol.">
        <title>Continuing evolution of Burkholderia mallei through genome reduction and large-scale rearrangements.</title>
        <authorList>
            <person name="Losada L."/>
            <person name="Ronning C.M."/>
            <person name="DeShazer D."/>
            <person name="Woods D."/>
            <person name="Fedorova N."/>
            <person name="Kim H.S."/>
            <person name="Shabalina S.A."/>
            <person name="Pearson T.R."/>
            <person name="Brinkac L."/>
            <person name="Tan P."/>
            <person name="Nandi T."/>
            <person name="Crabtree J."/>
            <person name="Badger J."/>
            <person name="Beckstrom-Sternberg S."/>
            <person name="Saqib M."/>
            <person name="Schutzer S.E."/>
            <person name="Keim P."/>
            <person name="Nierman W.C."/>
        </authorList>
    </citation>
    <scope>NUCLEOTIDE SEQUENCE [LARGE SCALE GENOMIC DNA]</scope>
    <source>
        <strain>1710b</strain>
    </source>
</reference>
<reference key="2">
    <citation type="journal article" date="2010" name="Biochem. Biophys. Res. Commun.">
        <title>Structural characterization of Burkholderia pseudomallei adenylate kinase (Adk): profound asymmetry in the crystal structure of the 'open' state.</title>
        <authorList>
            <person name="Buchko G.W."/>
            <person name="Robinson H."/>
            <person name="Abendroth J."/>
            <person name="Staker B.L."/>
            <person name="Myler P.J."/>
        </authorList>
    </citation>
    <scope>X-RAY CRYSTALLOGRAPHY (2.10 ANGSTROMS) OF 1-215</scope>
</reference>